<evidence type="ECO:0000255" key="1">
    <source>
        <dbReference type="HAMAP-Rule" id="MF_00022"/>
    </source>
</evidence>
<gene>
    <name evidence="1" type="primary">gltX</name>
    <name type="ordered locus">Mkms_1965</name>
</gene>
<dbReference type="EC" id="6.1.1.17" evidence="1"/>
<dbReference type="EMBL" id="CP000518">
    <property type="protein sequence ID" value="ABL91164.1"/>
    <property type="molecule type" value="Genomic_DNA"/>
</dbReference>
<dbReference type="SMR" id="A1UEA6"/>
<dbReference type="STRING" id="189918.Mkms_1965"/>
<dbReference type="KEGG" id="mkm:Mkms_1965"/>
<dbReference type="HOGENOM" id="CLU_015768_6_1_11"/>
<dbReference type="OrthoDB" id="9807503at2"/>
<dbReference type="GO" id="GO:0005829">
    <property type="term" value="C:cytosol"/>
    <property type="evidence" value="ECO:0007669"/>
    <property type="project" value="TreeGrafter"/>
</dbReference>
<dbReference type="GO" id="GO:0005524">
    <property type="term" value="F:ATP binding"/>
    <property type="evidence" value="ECO:0007669"/>
    <property type="project" value="UniProtKB-UniRule"/>
</dbReference>
<dbReference type="GO" id="GO:0004818">
    <property type="term" value="F:glutamate-tRNA ligase activity"/>
    <property type="evidence" value="ECO:0007669"/>
    <property type="project" value="UniProtKB-UniRule"/>
</dbReference>
<dbReference type="GO" id="GO:0000049">
    <property type="term" value="F:tRNA binding"/>
    <property type="evidence" value="ECO:0007669"/>
    <property type="project" value="InterPro"/>
</dbReference>
<dbReference type="GO" id="GO:0008270">
    <property type="term" value="F:zinc ion binding"/>
    <property type="evidence" value="ECO:0007669"/>
    <property type="project" value="InterPro"/>
</dbReference>
<dbReference type="GO" id="GO:0006424">
    <property type="term" value="P:glutamyl-tRNA aminoacylation"/>
    <property type="evidence" value="ECO:0007669"/>
    <property type="project" value="UniProtKB-UniRule"/>
</dbReference>
<dbReference type="CDD" id="cd00808">
    <property type="entry name" value="GluRS_core"/>
    <property type="match status" value="1"/>
</dbReference>
<dbReference type="FunFam" id="3.40.50.620:FF:000149">
    <property type="entry name" value="Glutamate--tRNA ligase"/>
    <property type="match status" value="1"/>
</dbReference>
<dbReference type="Gene3D" id="1.10.10.350">
    <property type="match status" value="1"/>
</dbReference>
<dbReference type="Gene3D" id="1.10.8.70">
    <property type="entry name" value="Glutamate-tRNA synthetase, class I, anticodon-binding domain 1"/>
    <property type="match status" value="1"/>
</dbReference>
<dbReference type="Gene3D" id="1.10.1160.10">
    <property type="entry name" value="Glutamyl-trna Synthetase, Domain 2"/>
    <property type="match status" value="1"/>
</dbReference>
<dbReference type="Gene3D" id="3.90.800.10">
    <property type="entry name" value="Glutamyl-tRNA Synthetase, Domain 3"/>
    <property type="match status" value="1"/>
</dbReference>
<dbReference type="Gene3D" id="3.40.50.620">
    <property type="entry name" value="HUPs"/>
    <property type="match status" value="1"/>
</dbReference>
<dbReference type="HAMAP" id="MF_00022">
    <property type="entry name" value="Glu_tRNA_synth_type1"/>
    <property type="match status" value="1"/>
</dbReference>
<dbReference type="InterPro" id="IPR045462">
    <property type="entry name" value="aa-tRNA-synth_I_cd-bd"/>
</dbReference>
<dbReference type="InterPro" id="IPR020751">
    <property type="entry name" value="aa-tRNA-synth_I_codon-bd_sub2"/>
</dbReference>
<dbReference type="InterPro" id="IPR008925">
    <property type="entry name" value="aa_tRNA-synth_I_cd-bd_sf"/>
</dbReference>
<dbReference type="InterPro" id="IPR004527">
    <property type="entry name" value="Glu-tRNA-ligase_bac/mito"/>
</dbReference>
<dbReference type="InterPro" id="IPR020752">
    <property type="entry name" value="Glu-tRNA-synth_I_codon-bd_sub1"/>
</dbReference>
<dbReference type="InterPro" id="IPR000924">
    <property type="entry name" value="Glu/Gln-tRNA-synth"/>
</dbReference>
<dbReference type="InterPro" id="IPR020058">
    <property type="entry name" value="Glu/Gln-tRNA-synth_Ib_cat-dom"/>
</dbReference>
<dbReference type="InterPro" id="IPR020061">
    <property type="entry name" value="Glu_tRNA_lig_a-bdl"/>
</dbReference>
<dbReference type="InterPro" id="IPR049940">
    <property type="entry name" value="GluQ/Sye"/>
</dbReference>
<dbReference type="InterPro" id="IPR033910">
    <property type="entry name" value="GluRS_core"/>
</dbReference>
<dbReference type="InterPro" id="IPR014729">
    <property type="entry name" value="Rossmann-like_a/b/a_fold"/>
</dbReference>
<dbReference type="NCBIfam" id="TIGR00464">
    <property type="entry name" value="gltX_bact"/>
    <property type="match status" value="1"/>
</dbReference>
<dbReference type="PANTHER" id="PTHR43311">
    <property type="entry name" value="GLUTAMATE--TRNA LIGASE"/>
    <property type="match status" value="1"/>
</dbReference>
<dbReference type="PANTHER" id="PTHR43311:SF2">
    <property type="entry name" value="GLUTAMATE--TRNA LIGASE, MITOCHONDRIAL-RELATED"/>
    <property type="match status" value="1"/>
</dbReference>
<dbReference type="Pfam" id="PF19269">
    <property type="entry name" value="Anticodon_2"/>
    <property type="match status" value="1"/>
</dbReference>
<dbReference type="Pfam" id="PF00749">
    <property type="entry name" value="tRNA-synt_1c"/>
    <property type="match status" value="1"/>
</dbReference>
<dbReference type="PRINTS" id="PR00987">
    <property type="entry name" value="TRNASYNTHGLU"/>
</dbReference>
<dbReference type="SUPFAM" id="SSF48163">
    <property type="entry name" value="An anticodon-binding domain of class I aminoacyl-tRNA synthetases"/>
    <property type="match status" value="1"/>
</dbReference>
<dbReference type="SUPFAM" id="SSF52374">
    <property type="entry name" value="Nucleotidylyl transferase"/>
    <property type="match status" value="1"/>
</dbReference>
<keyword id="KW-0030">Aminoacyl-tRNA synthetase</keyword>
<keyword id="KW-0067">ATP-binding</keyword>
<keyword id="KW-0963">Cytoplasm</keyword>
<keyword id="KW-0436">Ligase</keyword>
<keyword id="KW-0547">Nucleotide-binding</keyword>
<keyword id="KW-0648">Protein biosynthesis</keyword>
<sequence length="490" mass="53983">MNDMAVRVRFCPSPTGTPHVGLIRTALFNWAYARHTGGTFVFRIEDTDSARDSEESYQAILDALNWLGLDYDEGPEIGGPYAPYRQSQRRDLYRDVIDRLIAAGEAYEAYSTAEEVEARHLAAGRNPKLGYDNFDRDLTDEQRAAHRAEGRNPVIRLRMPERDITWRDLVRGETTFGAGTMPDFALTRGNGEPLYTLVNPVDDALMKITHVLRGEDLLPSTPRQIALYEALIRIGVADGVPEFAHLPSVLGDGNKKLSKRDPQSNLFLHRDRGFIPEGLLNYLALLGWGIADDRDVFSLDEMVAAFDVVDVNSNPARFDQKKADALNAEHIRLLSEDEFTARLKAYFAAHGHDTGLDDAQFAEAARLVQTRIVVLGDAWGLLKFLDEGAFVLDEKAAAKELKADAVPVLDAALAGLEGVGQWTTGAIEEALKKALLEDLELKPRKAFGPIRVAATGASVSPPLFESLELLGRDRSLARLRAGRDHAAAAA</sequence>
<feature type="chain" id="PRO_0000330982" description="Glutamate--tRNA ligase">
    <location>
        <begin position="1"/>
        <end position="490"/>
    </location>
</feature>
<feature type="short sequence motif" description="'HIGH' region" evidence="1">
    <location>
        <begin position="12"/>
        <end position="22"/>
    </location>
</feature>
<feature type="short sequence motif" description="'KMSKS' region" evidence="1">
    <location>
        <begin position="256"/>
        <end position="260"/>
    </location>
</feature>
<feature type="binding site" evidence="1">
    <location>
        <position position="259"/>
    </location>
    <ligand>
        <name>ATP</name>
        <dbReference type="ChEBI" id="CHEBI:30616"/>
    </ligand>
</feature>
<reference key="1">
    <citation type="submission" date="2006-12" db="EMBL/GenBank/DDBJ databases">
        <title>Complete sequence of chromosome of Mycobacterium sp. KMS.</title>
        <authorList>
            <consortium name="US DOE Joint Genome Institute"/>
            <person name="Copeland A."/>
            <person name="Lucas S."/>
            <person name="Lapidus A."/>
            <person name="Barry K."/>
            <person name="Detter J.C."/>
            <person name="Glavina del Rio T."/>
            <person name="Hammon N."/>
            <person name="Israni S."/>
            <person name="Dalin E."/>
            <person name="Tice H."/>
            <person name="Pitluck S."/>
            <person name="Kiss H."/>
            <person name="Brettin T."/>
            <person name="Bruce D."/>
            <person name="Han C."/>
            <person name="Tapia R."/>
            <person name="Gilna P."/>
            <person name="Schmutz J."/>
            <person name="Larimer F."/>
            <person name="Land M."/>
            <person name="Hauser L."/>
            <person name="Kyrpides N."/>
            <person name="Mikhailova N."/>
            <person name="Miller C.D."/>
            <person name="Richardson P."/>
        </authorList>
    </citation>
    <scope>NUCLEOTIDE SEQUENCE [LARGE SCALE GENOMIC DNA]</scope>
    <source>
        <strain>KMS</strain>
    </source>
</reference>
<protein>
    <recommendedName>
        <fullName evidence="1">Glutamate--tRNA ligase</fullName>
        <ecNumber evidence="1">6.1.1.17</ecNumber>
    </recommendedName>
    <alternativeName>
        <fullName evidence="1">Glutamyl-tRNA synthetase</fullName>
        <shortName evidence="1">GluRS</shortName>
    </alternativeName>
</protein>
<organism>
    <name type="scientific">Mycobacterium sp. (strain KMS)</name>
    <dbReference type="NCBI Taxonomy" id="189918"/>
    <lineage>
        <taxon>Bacteria</taxon>
        <taxon>Bacillati</taxon>
        <taxon>Actinomycetota</taxon>
        <taxon>Actinomycetes</taxon>
        <taxon>Mycobacteriales</taxon>
        <taxon>Mycobacteriaceae</taxon>
        <taxon>Mycobacterium</taxon>
    </lineage>
</organism>
<name>SYE_MYCSK</name>
<comment type="function">
    <text evidence="1">Catalyzes the attachment of glutamate to tRNA(Glu) in a two-step reaction: glutamate is first activated by ATP to form Glu-AMP and then transferred to the acceptor end of tRNA(Glu).</text>
</comment>
<comment type="catalytic activity">
    <reaction evidence="1">
        <text>tRNA(Glu) + L-glutamate + ATP = L-glutamyl-tRNA(Glu) + AMP + diphosphate</text>
        <dbReference type="Rhea" id="RHEA:23540"/>
        <dbReference type="Rhea" id="RHEA-COMP:9663"/>
        <dbReference type="Rhea" id="RHEA-COMP:9680"/>
        <dbReference type="ChEBI" id="CHEBI:29985"/>
        <dbReference type="ChEBI" id="CHEBI:30616"/>
        <dbReference type="ChEBI" id="CHEBI:33019"/>
        <dbReference type="ChEBI" id="CHEBI:78442"/>
        <dbReference type="ChEBI" id="CHEBI:78520"/>
        <dbReference type="ChEBI" id="CHEBI:456215"/>
        <dbReference type="EC" id="6.1.1.17"/>
    </reaction>
</comment>
<comment type="subunit">
    <text evidence="1">Monomer.</text>
</comment>
<comment type="subcellular location">
    <subcellularLocation>
        <location evidence="1">Cytoplasm</location>
    </subcellularLocation>
</comment>
<comment type="similarity">
    <text evidence="1">Belongs to the class-I aminoacyl-tRNA synthetase family. Glutamate--tRNA ligase type 1 subfamily.</text>
</comment>
<accession>A1UEA6</accession>
<proteinExistence type="inferred from homology"/>